<organism>
    <name type="scientific">Guillardia theta</name>
    <name type="common">Cryptophyte</name>
    <name type="synonym">Cryptomonas phi</name>
    <dbReference type="NCBI Taxonomy" id="55529"/>
    <lineage>
        <taxon>Eukaryota</taxon>
        <taxon>Cryptophyceae</taxon>
        <taxon>Pyrenomonadales</taxon>
        <taxon>Geminigeraceae</taxon>
        <taxon>Guillardia</taxon>
    </lineage>
</organism>
<geneLocation type="chloroplast"/>
<dbReference type="EC" id="5.6.1.7" evidence="1"/>
<dbReference type="EMBL" id="AF041468">
    <property type="protein sequence ID" value="AAC35604.1"/>
    <property type="molecule type" value="Genomic_DNA"/>
</dbReference>
<dbReference type="RefSeq" id="NP_050670.1">
    <property type="nucleotide sequence ID" value="NC_000926.1"/>
</dbReference>
<dbReference type="SMR" id="O78419"/>
<dbReference type="GeneID" id="856959"/>
<dbReference type="HOGENOM" id="CLU_016503_3_0_1"/>
<dbReference type="OMA" id="DSTWDRE"/>
<dbReference type="GO" id="GO:0009507">
    <property type="term" value="C:chloroplast"/>
    <property type="evidence" value="ECO:0007669"/>
    <property type="project" value="UniProtKB-SubCell"/>
</dbReference>
<dbReference type="GO" id="GO:0005524">
    <property type="term" value="F:ATP binding"/>
    <property type="evidence" value="ECO:0007669"/>
    <property type="project" value="UniProtKB-UniRule"/>
</dbReference>
<dbReference type="GO" id="GO:0140662">
    <property type="term" value="F:ATP-dependent protein folding chaperone"/>
    <property type="evidence" value="ECO:0007669"/>
    <property type="project" value="InterPro"/>
</dbReference>
<dbReference type="GO" id="GO:0016853">
    <property type="term" value="F:isomerase activity"/>
    <property type="evidence" value="ECO:0007669"/>
    <property type="project" value="UniProtKB-KW"/>
</dbReference>
<dbReference type="GO" id="GO:0051082">
    <property type="term" value="F:unfolded protein binding"/>
    <property type="evidence" value="ECO:0007669"/>
    <property type="project" value="UniProtKB-UniRule"/>
</dbReference>
<dbReference type="GO" id="GO:0042026">
    <property type="term" value="P:protein refolding"/>
    <property type="evidence" value="ECO:0007669"/>
    <property type="project" value="UniProtKB-UniRule"/>
</dbReference>
<dbReference type="CDD" id="cd03344">
    <property type="entry name" value="GroEL"/>
    <property type="match status" value="1"/>
</dbReference>
<dbReference type="FunFam" id="3.50.7.10:FF:000001">
    <property type="entry name" value="60 kDa chaperonin"/>
    <property type="match status" value="1"/>
</dbReference>
<dbReference type="Gene3D" id="3.50.7.10">
    <property type="entry name" value="GroEL"/>
    <property type="match status" value="1"/>
</dbReference>
<dbReference type="Gene3D" id="1.10.560.10">
    <property type="entry name" value="GroEL-like equatorial domain"/>
    <property type="match status" value="1"/>
</dbReference>
<dbReference type="Gene3D" id="3.30.260.10">
    <property type="entry name" value="TCP-1-like chaperonin intermediate domain"/>
    <property type="match status" value="1"/>
</dbReference>
<dbReference type="HAMAP" id="MF_00600">
    <property type="entry name" value="CH60"/>
    <property type="match status" value="1"/>
</dbReference>
<dbReference type="InterPro" id="IPR018370">
    <property type="entry name" value="Chaperonin_Cpn60_CS"/>
</dbReference>
<dbReference type="InterPro" id="IPR001844">
    <property type="entry name" value="Cpn60/GroEL"/>
</dbReference>
<dbReference type="InterPro" id="IPR002423">
    <property type="entry name" value="Cpn60/GroEL/TCP-1"/>
</dbReference>
<dbReference type="InterPro" id="IPR027409">
    <property type="entry name" value="GroEL-like_apical_dom_sf"/>
</dbReference>
<dbReference type="InterPro" id="IPR027413">
    <property type="entry name" value="GROEL-like_equatorial_sf"/>
</dbReference>
<dbReference type="InterPro" id="IPR027410">
    <property type="entry name" value="TCP-1-like_intermed_sf"/>
</dbReference>
<dbReference type="NCBIfam" id="TIGR02348">
    <property type="entry name" value="GroEL"/>
    <property type="match status" value="1"/>
</dbReference>
<dbReference type="NCBIfam" id="NF000592">
    <property type="entry name" value="PRK00013.1"/>
    <property type="match status" value="1"/>
</dbReference>
<dbReference type="NCBIfam" id="NF009487">
    <property type="entry name" value="PRK12849.1"/>
    <property type="match status" value="1"/>
</dbReference>
<dbReference type="NCBIfam" id="NF009488">
    <property type="entry name" value="PRK12850.1"/>
    <property type="match status" value="1"/>
</dbReference>
<dbReference type="NCBIfam" id="NF009489">
    <property type="entry name" value="PRK12851.1"/>
    <property type="match status" value="1"/>
</dbReference>
<dbReference type="PANTHER" id="PTHR45633">
    <property type="entry name" value="60 KDA HEAT SHOCK PROTEIN, MITOCHONDRIAL"/>
    <property type="match status" value="1"/>
</dbReference>
<dbReference type="Pfam" id="PF00118">
    <property type="entry name" value="Cpn60_TCP1"/>
    <property type="match status" value="1"/>
</dbReference>
<dbReference type="PRINTS" id="PR00298">
    <property type="entry name" value="CHAPERONIN60"/>
</dbReference>
<dbReference type="SUPFAM" id="SSF52029">
    <property type="entry name" value="GroEL apical domain-like"/>
    <property type="match status" value="1"/>
</dbReference>
<dbReference type="SUPFAM" id="SSF48592">
    <property type="entry name" value="GroEL equatorial domain-like"/>
    <property type="match status" value="2"/>
</dbReference>
<dbReference type="PROSITE" id="PS00296">
    <property type="entry name" value="CHAPERONINS_CPN60"/>
    <property type="match status" value="1"/>
</dbReference>
<name>CH60_GUITH</name>
<sequence length="529" mass="57403">MSKIILYQEDARRALERGMDILAEAVSVTLGPKGRNVVLERKYGAPQIVNDGVTIAKEIELEDHIENTGVALIRQAASKTNDVAGDGTTTATVLAHAMVKQGMKNVAAGANAIALKRGIEKATQFIVTQIAEYARPVEDTRAISQVASISAGNDIETGKMIADAIDKVGREGVISLEEGKSTITELEMTEGMCFEKGFISPYFVTDTERMEVIQDNPYILLTDKKITLVQQELLPTLELISKTSRPLVIIAEDVEKEALATLVVNKLRGIVNVVAVRAPGFGDRRKAMLEDIAILTGGQVISEDAGFSLETLTLDMLGQARRITITKENTTIIAEGNEKDVKSRCEQIRRQIEASDSSYEREKLQERLAKLAGGVAVIKVGAATETEMKDKKLRLEDAINATKAAVEEGIVPGGGSTLTHLANDLKDWAEDNLIEDELIGALIVERSLTSPLRRIIENTGQNSAIIIEQIKESEFNIGYDAAKGEIVDMYDVGIIDPAKVTRSGLQNAASIASMILTTECIVVDKQDEK</sequence>
<proteinExistence type="inferred from homology"/>
<accession>O78419</accession>
<keyword id="KW-0067">ATP-binding</keyword>
<keyword id="KW-0143">Chaperone</keyword>
<keyword id="KW-0150">Chloroplast</keyword>
<keyword id="KW-0413">Isomerase</keyword>
<keyword id="KW-0547">Nucleotide-binding</keyword>
<keyword id="KW-0934">Plastid</keyword>
<evidence type="ECO:0000255" key="1">
    <source>
        <dbReference type="HAMAP-Rule" id="MF_00600"/>
    </source>
</evidence>
<protein>
    <recommendedName>
        <fullName evidence="1">Chaperonin GroEL, chloroplastic</fullName>
        <ecNumber evidence="1">5.6.1.7</ecNumber>
    </recommendedName>
    <alternativeName>
        <fullName evidence="1">60 kDa chaperonin</fullName>
    </alternativeName>
    <alternativeName>
        <fullName evidence="1">Chaperonin-60</fullName>
        <shortName evidence="1">Cpn60</shortName>
    </alternativeName>
</protein>
<feature type="chain" id="PRO_0000063625" description="Chaperonin GroEL, chloroplastic">
    <location>
        <begin position="1"/>
        <end position="529"/>
    </location>
</feature>
<feature type="binding site" evidence="1">
    <location>
        <begin position="29"/>
        <end position="32"/>
    </location>
    <ligand>
        <name>ATP</name>
        <dbReference type="ChEBI" id="CHEBI:30616"/>
    </ligand>
</feature>
<feature type="binding site" evidence="1">
    <location>
        <begin position="86"/>
        <end position="90"/>
    </location>
    <ligand>
        <name>ATP</name>
        <dbReference type="ChEBI" id="CHEBI:30616"/>
    </ligand>
</feature>
<feature type="binding site" evidence="1">
    <location>
        <position position="414"/>
    </location>
    <ligand>
        <name>ATP</name>
        <dbReference type="ChEBI" id="CHEBI:30616"/>
    </ligand>
</feature>
<feature type="binding site" evidence="1">
    <location>
        <begin position="480"/>
        <end position="482"/>
    </location>
    <ligand>
        <name>ATP</name>
        <dbReference type="ChEBI" id="CHEBI:30616"/>
    </ligand>
</feature>
<feature type="binding site" evidence="1">
    <location>
        <position position="496"/>
    </location>
    <ligand>
        <name>ATP</name>
        <dbReference type="ChEBI" id="CHEBI:30616"/>
    </ligand>
</feature>
<reference key="1">
    <citation type="journal article" date="1999" name="J. Mol. Evol.">
        <title>The plastid genome of the cryptophyte alga, Guillardia theta: complete sequence and conserved synteny groups confirm its common ancestry with red algae.</title>
        <authorList>
            <person name="Douglas S.E."/>
            <person name="Penny S.L."/>
        </authorList>
    </citation>
    <scope>NUCLEOTIDE SEQUENCE [LARGE SCALE GENOMIC DNA]</scope>
</reference>
<comment type="function">
    <text evidence="1">Together with its co-chaperonin GroES, plays an essential role in assisting protein folding. The GroEL-GroES system forms a nano-cage that allows encapsulation of the non-native substrate proteins and provides a physical environment optimized to promote and accelerate protein folding.</text>
</comment>
<comment type="catalytic activity">
    <reaction evidence="1">
        <text>ATP + H2O + a folded polypeptide = ADP + phosphate + an unfolded polypeptide.</text>
        <dbReference type="EC" id="5.6.1.7"/>
    </reaction>
</comment>
<comment type="subunit">
    <text evidence="1">Forms a cylinder of 14 subunits composed of two heptameric rings stacked back-to-back. Interacts with the co-chaperonin GroES.</text>
</comment>
<comment type="subcellular location">
    <subcellularLocation>
        <location evidence="1">Plastid</location>
        <location evidence="1">Chloroplast</location>
    </subcellularLocation>
</comment>
<comment type="similarity">
    <text evidence="1">Belongs to the chaperonin (HSP60) family.</text>
</comment>
<gene>
    <name evidence="1" type="primary">groEL</name>
    <name evidence="1" type="synonym">groL</name>
</gene>